<protein>
    <recommendedName>
        <fullName>Chromobox protein homolog 2</fullName>
    </recommendedName>
</protein>
<reference key="1">
    <citation type="journal article" date="2006" name="Nature">
        <title>DNA sequence of human chromosome 17 and analysis of rearrangement in the human lineage.</title>
        <authorList>
            <person name="Zody M.C."/>
            <person name="Garber M."/>
            <person name="Adams D.J."/>
            <person name="Sharpe T."/>
            <person name="Harrow J."/>
            <person name="Lupski J.R."/>
            <person name="Nicholson C."/>
            <person name="Searle S.M."/>
            <person name="Wilming L."/>
            <person name="Young S.K."/>
            <person name="Abouelleil A."/>
            <person name="Allen N.R."/>
            <person name="Bi W."/>
            <person name="Bloom T."/>
            <person name="Borowsky M.L."/>
            <person name="Bugalter B.E."/>
            <person name="Butler J."/>
            <person name="Chang J.L."/>
            <person name="Chen C.-K."/>
            <person name="Cook A."/>
            <person name="Corum B."/>
            <person name="Cuomo C.A."/>
            <person name="de Jong P.J."/>
            <person name="DeCaprio D."/>
            <person name="Dewar K."/>
            <person name="FitzGerald M."/>
            <person name="Gilbert J."/>
            <person name="Gibson R."/>
            <person name="Gnerre S."/>
            <person name="Goldstein S."/>
            <person name="Grafham D.V."/>
            <person name="Grocock R."/>
            <person name="Hafez N."/>
            <person name="Hagopian D.S."/>
            <person name="Hart E."/>
            <person name="Norman C.H."/>
            <person name="Humphray S."/>
            <person name="Jaffe D.B."/>
            <person name="Jones M."/>
            <person name="Kamal M."/>
            <person name="Khodiyar V.K."/>
            <person name="LaButti K."/>
            <person name="Laird G."/>
            <person name="Lehoczky J."/>
            <person name="Liu X."/>
            <person name="Lokyitsang T."/>
            <person name="Loveland J."/>
            <person name="Lui A."/>
            <person name="Macdonald P."/>
            <person name="Major J.E."/>
            <person name="Matthews L."/>
            <person name="Mauceli E."/>
            <person name="McCarroll S.A."/>
            <person name="Mihalev A.H."/>
            <person name="Mudge J."/>
            <person name="Nguyen C."/>
            <person name="Nicol R."/>
            <person name="O'Leary S.B."/>
            <person name="Osoegawa K."/>
            <person name="Schwartz D.C."/>
            <person name="Shaw-Smith C."/>
            <person name="Stankiewicz P."/>
            <person name="Steward C."/>
            <person name="Swarbreck D."/>
            <person name="Venkataraman V."/>
            <person name="Whittaker C.A."/>
            <person name="Yang X."/>
            <person name="Zimmer A.R."/>
            <person name="Bradley A."/>
            <person name="Hubbard T."/>
            <person name="Birren B.W."/>
            <person name="Rogers J."/>
            <person name="Lander E.S."/>
            <person name="Nusbaum C."/>
        </authorList>
    </citation>
    <scope>NUCLEOTIDE SEQUENCE [LARGE SCALE GENOMIC DNA]</scope>
</reference>
<reference key="2">
    <citation type="journal article" date="2004" name="Genome Res.">
        <title>The status, quality, and expansion of the NIH full-length cDNA project: the Mammalian Gene Collection (MGC).</title>
        <authorList>
            <consortium name="The MGC Project Team"/>
        </authorList>
    </citation>
    <scope>NUCLEOTIDE SEQUENCE [LARGE SCALE MRNA] (ISOFORM 2)</scope>
    <source>
        <tissue>Uterus</tissue>
    </source>
</reference>
<reference key="3">
    <citation type="journal article" date="1995" name="Genomics">
        <title>Assignment of a Polycomb-like chromobox gene (CBX2) to human chromosome 17q25.</title>
        <authorList>
            <person name="Gecz J."/>
            <person name="Gaunt S.J."/>
            <person name="Passage E."/>
            <person name="Burton R.D."/>
            <person name="Cudrey C."/>
            <person name="Pearce J.J.H."/>
            <person name="Fontes M."/>
        </authorList>
    </citation>
    <scope>NUCLEOTIDE SEQUENCE [MRNA] OF 455-532</scope>
    <source>
        <tissue>Peripheral blood</tissue>
    </source>
</reference>
<reference key="4">
    <citation type="journal article" date="2002" name="Mol. Cell. Biol.">
        <title>The core of the polycomb repressive complex is compositionally and functionally conserved in flies and humans.</title>
        <authorList>
            <person name="Levine S.S."/>
            <person name="Weiss A."/>
            <person name="Erdjument-Bromage H."/>
            <person name="Shao Z."/>
            <person name="Tempst P."/>
            <person name="Kingston R.E."/>
        </authorList>
    </citation>
    <scope>IDENTIFICATION BY MASS SPECTROMETRY</scope>
    <scope>IDENTIFICATION IN A PRC1-LIKE HPRC-H COMPLEX WITH BMI1; CBX4; CBX8; PHC1; PHC2; PHC3; RING1 AND RNF2</scope>
</reference>
<reference key="5">
    <citation type="journal article" date="2008" name="Proc. Natl. Acad. Sci. U.S.A.">
        <title>Different polycomb group CBX family proteins associate with distinct regions of chromatin using nonhomologous protein sequences.</title>
        <authorList>
            <person name="Vincenz C."/>
            <person name="Kerppola T.K."/>
        </authorList>
    </citation>
    <scope>INTERACTION WITH H3C15; H3C1 AND RNF2</scope>
    <scope>SUBCELLULAR LOCATION</scope>
    <scope>DEVELOPMENTAL STAGE</scope>
    <scope>MUTAGENESIS OF ILE-17</scope>
</reference>
<reference key="6">
    <citation type="journal article" date="2009" name="Am. J. Hum. Genet.">
        <title>Ovaries and female phenotype in a girl with 46,XY karyotype and mutations in the CBX2 gene.</title>
        <authorList>
            <person name="Biason-Lauber A."/>
            <person name="Konrad D."/>
            <person name="Meyer M."/>
            <person name="DeBeaufort C."/>
            <person name="Schoenle E.J."/>
        </authorList>
    </citation>
    <scope>FUNCTION IN SEXUAL DEVELOPMENT</scope>
    <scope>VARIANTS SRXY5 LEU-98 AND PRO-443</scope>
</reference>
<reference key="7">
    <citation type="journal article" date="2009" name="PLoS ONE">
        <title>Several distinct polycomb complexes regulate and co-localize on the INK4a tumor suppressor locus.</title>
        <authorList>
            <person name="Maertens G.N."/>
            <person name="El Messaoudi-Aubert S."/>
            <person name="Racek T."/>
            <person name="Stock J.K."/>
            <person name="Nicholls J."/>
            <person name="Rodriguez-Niedenfuhr M."/>
            <person name="Gil J."/>
            <person name="Peters G."/>
        </authorList>
    </citation>
    <scope>IDENTIFICATION IN A PRC1-LIKE COMPLEX</scope>
</reference>
<reference key="8">
    <citation type="journal article" date="2011" name="Mol. Cell. Proteomics">
        <title>Interaction proteomics analysis of polycomb proteins defines distinct PRC1 Complexes in mammalian cells.</title>
        <authorList>
            <person name="Vandamme J."/>
            <person name="Volkel P."/>
            <person name="Rosnoblet C."/>
            <person name="Le Faou P."/>
            <person name="Angrand P.O."/>
        </authorList>
    </citation>
    <scope>FUNCTION</scope>
    <scope>IDENTIFICATION BY MASS SPECTROMETRY (ISOFORM 2)</scope>
    <scope>IDENTIFICATION IN A PRC1-LIKE COMPLEX</scope>
    <scope>SUBCELLULAR LOCATION</scope>
</reference>
<reference key="9">
    <citation type="journal article" date="2013" name="J. Proteome Res.">
        <title>Toward a comprehensive characterization of a human cancer cell phosphoproteome.</title>
        <authorList>
            <person name="Zhou H."/>
            <person name="Di Palma S."/>
            <person name="Preisinger C."/>
            <person name="Peng M."/>
            <person name="Polat A.N."/>
            <person name="Heck A.J."/>
            <person name="Mohammed S."/>
        </authorList>
    </citation>
    <scope>PHOSPHORYLATION [LARGE SCALE ANALYSIS] AT SER-302</scope>
    <scope>IDENTIFICATION BY MASS SPECTROMETRY [LARGE SCALE ANALYSIS]</scope>
    <source>
        <tissue>Cervix carcinoma</tissue>
        <tissue>Erythroleukemia</tissue>
    </source>
</reference>
<reference key="10">
    <citation type="journal article" date="2014" name="Mol. Cell. Proteomics">
        <title>Immunoaffinity enrichment and mass spectrometry analysis of protein methylation.</title>
        <authorList>
            <person name="Guo A."/>
            <person name="Gu H."/>
            <person name="Zhou J."/>
            <person name="Mulhern D."/>
            <person name="Wang Y."/>
            <person name="Lee K.A."/>
            <person name="Yang V."/>
            <person name="Aguiar M."/>
            <person name="Kornhauser J."/>
            <person name="Jia X."/>
            <person name="Ren J."/>
            <person name="Beausoleil S.A."/>
            <person name="Silva J.C."/>
            <person name="Vemulapalli V."/>
            <person name="Bedford M.T."/>
            <person name="Comb M.J."/>
        </authorList>
    </citation>
    <scope>METHYLATION [LARGE SCALE ANALYSIS] AT ARG-247</scope>
    <scope>IDENTIFICATION BY MASS SPECTROMETRY [LARGE SCALE ANALYSIS]</scope>
    <source>
        <tissue>Colon carcinoma</tissue>
    </source>
</reference>
<reference key="11">
    <citation type="journal article" date="2017" name="Nat. Struct. Mol. Biol.">
        <title>Site-specific mapping of the human SUMO proteome reveals co-modification with phosphorylation.</title>
        <authorList>
            <person name="Hendriks I.A."/>
            <person name="Lyon D."/>
            <person name="Young C."/>
            <person name="Jensen L.J."/>
            <person name="Vertegaal A.C."/>
            <person name="Nielsen M.L."/>
        </authorList>
    </citation>
    <scope>SUMOYLATION [LARGE SCALE ANALYSIS] AT LYS-146 AND LYS-153</scope>
    <scope>IDENTIFICATION BY MASS SPECTROMETRY [LARGE SCALE ANALYSIS]</scope>
</reference>
<reference key="12">
    <citation type="submission" date="2007-01" db="PDB data bank">
        <title>Solution structure of the chromo domain of chromobox homolog 2 from human.</title>
        <authorList>
            <consortium name="RIKEN structural genomics initiative (RSGI)"/>
        </authorList>
    </citation>
    <scope>STRUCTURE BY NMR OF 6-69</scope>
</reference>
<sequence length="532" mass="56081">MEELSSVGEQVFAAECILSKRLRKGKLEYLVKWRGWSSKHNSWEPEENILDPRLLLAFQKKEHEKEVQNRKRGKRPRGRPRKLTAMSSCSRRSKLKEPDAPSKSKSSSSSSSSTSSSSSSDEEDDSDLDAKRGPRGRETHPVPQKKAQILVAKPELKDPIRKKRGRKPLPPEQKATRRPVSLAKVLKTARKDLGAPASKLPPPLSAPVAGLAALKAHAKEACGGPSAMATPENLASLMKGMASSPGRGGISWQSSIVHYMNRMTQSQAQAASRLALKAQATNKCGLGLDLKVRTQKGELGMSPPGSKIPKAPSGGAVEQKVGNTGGPPHTHGASRVPAGCPGPQPAPTQELSLQVLDLQSVKNGMPGVGLLARHATATKGVPATNPAPGKGTGSGLIGASGATMPTDTSKSEKLASRAVAPPTPASKRDCVKGSATPSGQESRTAPGEARKAATLPEMSAGEESSSSDSDPDSASPPSTGQNPSVSVQTSQDWKPTRSLIEHVFVTDVTANLITVTVKESPTSVGFFNLRHY</sequence>
<proteinExistence type="evidence at protein level"/>
<accession>Q14781</accession>
<accession>Q0VDA5</accession>
<accession>Q9BTB1</accession>
<comment type="function">
    <text evidence="1 7 9">Component of a Polycomb group (PcG) multiprotein PRC1-like complex, a complex class required to maintain the transcriptionally repressive state of many genes, including Hox genes, throughout development (PubMed:21282530). PcG PRC1 complex acts via chromatin remodeling and modification of histones; it mediates monoubiquitination of histone H2A 'Lys-119', rendering chromatin heritably changed in its expressibility (PubMed:21282530). Binds to histone H3 trimethylated at 'Lys-9' (H3K9me3) or at 'Lys-27' (H3K27me3) (By similarity). Plays a role in the lineage differentiation of the germ layers in embryonic development (By similarity). Involved in sexual development, acting as activator of NR5A1 expression (PubMed:19361780).</text>
</comment>
<comment type="subunit">
    <text evidence="1 5 6 8 9">Component of a PRC1-like complex (PubMed:12167701, PubMed:19636380, PubMed:21282530). The composition of the PRC1 complex may differ between the PRC1 complex in pluripotent embryonic stem cells containing RNF2, CBX7 and PCGF2, and the PRC1 complex in differentiating cells containing RNF2, CBX2, CBX4 and BMI1 (By similarity). May interact with H3C15, H3C1 and RNF2 (PubMed:18927235). Interacts (via chromodomain) with histone H3K9Me3 and H3K27me3 (By similarity).</text>
</comment>
<comment type="interaction">
    <interactant intactId="EBI-745934">
        <id>Q14781</id>
    </interactant>
    <interactant intactId="EBI-1051531">
        <id>Q6P158</id>
        <label>DHX57</label>
    </interactant>
    <organismsDiffer>false</organismsDiffer>
    <experiments>3</experiments>
</comment>
<comment type="interaction">
    <interactant intactId="EBI-745934">
        <id>Q14781</id>
    </interactant>
    <interactant intactId="EBI-10172290">
        <id>P60409</id>
        <label>KRTAP10-7</label>
    </interactant>
    <organismsDiffer>false</organismsDiffer>
    <experiments>3</experiments>
</comment>
<comment type="interaction">
    <interactant intactId="EBI-745934">
        <id>Q14781</id>
    </interactant>
    <interactant intactId="EBI-10172052">
        <id>P60411</id>
        <label>KRTAP10-9</label>
    </interactant>
    <organismsDiffer>false</organismsDiffer>
    <experiments>3</experiments>
</comment>
<comment type="interaction">
    <interactant intactId="EBI-745934">
        <id>Q14781</id>
    </interactant>
    <interactant intactId="EBI-10196781">
        <id>P0C7H8</id>
        <label>KRTAP2-3</label>
    </interactant>
    <organismsDiffer>false</organismsDiffer>
    <experiments>3</experiments>
</comment>
<comment type="interaction">
    <interactant intactId="EBI-745934">
        <id>Q14781</id>
    </interactant>
    <interactant intactId="EBI-724076">
        <id>Q99750</id>
        <label>MDFI</label>
    </interactant>
    <organismsDiffer>false</organismsDiffer>
    <experiments>3</experiments>
</comment>
<comment type="interaction">
    <interactant intactId="EBI-745934">
        <id>Q14781</id>
    </interactant>
    <interactant intactId="EBI-8638511">
        <id>P0DJD3</id>
        <label>RBMY1A1</label>
    </interactant>
    <organismsDiffer>false</organismsDiffer>
    <experiments>3</experiments>
</comment>
<comment type="interaction">
    <interactant intactId="EBI-745934">
        <id>Q14781</id>
    </interactant>
    <interactant intactId="EBI-8642021">
        <id>Q15415</id>
        <label>RBMY1J</label>
    </interactant>
    <organismsDiffer>false</organismsDiffer>
    <experiments>3</experiments>
</comment>
<comment type="interaction">
    <interactant intactId="EBI-11974585">
        <id>Q14781-2</id>
    </interactant>
    <interactant intactId="EBI-11983447">
        <id>Q8N9W6-4</id>
        <label>BOLL</label>
    </interactant>
    <organismsDiffer>false</organismsDiffer>
    <experiments>3</experiments>
</comment>
<comment type="interaction">
    <interactant intactId="EBI-11974585">
        <id>Q14781-2</id>
    </interactant>
    <interactant intactId="EBI-3867333">
        <id>A8MQ03</id>
        <label>CYSRT1</label>
    </interactant>
    <organismsDiffer>false</organismsDiffer>
    <experiments>3</experiments>
</comment>
<comment type="interaction">
    <interactant intactId="EBI-11974585">
        <id>Q14781-2</id>
    </interactant>
    <interactant intactId="EBI-1051531">
        <id>Q6P158</id>
        <label>DHX57</label>
    </interactant>
    <organismsDiffer>false</organismsDiffer>
    <experiments>3</experiments>
</comment>
<comment type="interaction">
    <interactant intactId="EBI-11974585">
        <id>Q14781-2</id>
    </interactant>
    <interactant intactId="EBI-10976677">
        <id>G5E9A7</id>
        <label>DMWD</label>
    </interactant>
    <organismsDiffer>false</organismsDiffer>
    <experiments>3</experiments>
</comment>
<comment type="interaction">
    <interactant intactId="EBI-11974585">
        <id>Q14781-2</id>
    </interactant>
    <interactant intactId="EBI-389564">
        <id>Q00403</id>
        <label>GTF2B</label>
    </interactant>
    <organismsDiffer>false</organismsDiffer>
    <experiments>3</experiments>
</comment>
<comment type="interaction">
    <interactant intactId="EBI-11974585">
        <id>Q14781-2</id>
    </interactant>
    <interactant intactId="EBI-1054873">
        <id>Q9Y5Q9</id>
        <label>GTF3C3</label>
    </interactant>
    <organismsDiffer>false</organismsDiffer>
    <experiments>3</experiments>
</comment>
<comment type="interaction">
    <interactant intactId="EBI-11974585">
        <id>Q14781-2</id>
    </interactant>
    <interactant intactId="EBI-10176379">
        <id>P59991</id>
        <label>KRTAP12-2</label>
    </interactant>
    <organismsDiffer>false</organismsDiffer>
    <experiments>3</experiments>
</comment>
<comment type="interaction">
    <interactant intactId="EBI-11974585">
        <id>Q14781-2</id>
    </interactant>
    <interactant intactId="EBI-11953334">
        <id>P60328</id>
        <label>KRTAP12-3</label>
    </interactant>
    <organismsDiffer>false</organismsDiffer>
    <experiments>3</experiments>
</comment>
<comment type="interaction">
    <interactant intactId="EBI-11974585">
        <id>Q14781-2</id>
    </interactant>
    <interactant intactId="EBI-11958132">
        <id>Q9BYR3</id>
        <label>KRTAP4-4</label>
    </interactant>
    <organismsDiffer>false</organismsDiffer>
    <experiments>3</experiments>
</comment>
<comment type="interaction">
    <interactant intactId="EBI-11974585">
        <id>Q14781-2</id>
    </interactant>
    <interactant intactId="EBI-724076">
        <id>Q99750</id>
        <label>MDFI</label>
    </interactant>
    <organismsDiffer>false</organismsDiffer>
    <experiments>3</experiments>
</comment>
<comment type="interaction">
    <interactant intactId="EBI-11974585">
        <id>Q14781-2</id>
    </interactant>
    <interactant intactId="EBI-16439278">
        <id>Q6FHY5</id>
        <label>MEOX2</label>
    </interactant>
    <organismsDiffer>false</organismsDiffer>
    <experiments>3</experiments>
</comment>
<comment type="interaction">
    <interactant intactId="EBI-11974585">
        <id>Q14781-2</id>
    </interactant>
    <interactant intactId="EBI-50433196">
        <id>A0A6Q8PF08</id>
        <label>PMP22</label>
    </interactant>
    <organismsDiffer>false</organismsDiffer>
    <experiments>3</experiments>
</comment>
<comment type="interaction">
    <interactant intactId="EBI-11974585">
        <id>Q14781-2</id>
    </interactant>
    <interactant intactId="EBI-8642021">
        <id>Q15415</id>
        <label>RBMY1J</label>
    </interactant>
    <organismsDiffer>false</organismsDiffer>
    <experiments>3</experiments>
</comment>
<comment type="interaction">
    <interactant intactId="EBI-11974585">
        <id>Q14781-2</id>
    </interactant>
    <interactant intactId="EBI-11987469">
        <id>Q6ZRY4</id>
        <label>RBPMS2</label>
    </interactant>
    <organismsDiffer>false</organismsDiffer>
    <experiments>3</experiments>
</comment>
<comment type="interaction">
    <interactant intactId="EBI-11974585">
        <id>Q14781-2</id>
    </interactant>
    <interactant intactId="EBI-5235340">
        <id>Q7Z699</id>
        <label>SPRED1</label>
    </interactant>
    <organismsDiffer>false</organismsDiffer>
    <experiments>3</experiments>
</comment>
<comment type="interaction">
    <interactant intactId="EBI-11974585">
        <id>Q14781-2</id>
    </interactant>
    <interactant intactId="EBI-372899">
        <id>Q13148</id>
        <label>TARDBP</label>
    </interactant>
    <organismsDiffer>false</organismsDiffer>
    <experiments>6</experiments>
</comment>
<comment type="interaction">
    <interactant intactId="EBI-11974585">
        <id>Q14781-2</id>
    </interactant>
    <interactant intactId="EBI-1048893">
        <id>P54577</id>
        <label>YARS1</label>
    </interactant>
    <organismsDiffer>false</organismsDiffer>
    <experiments>3</experiments>
</comment>
<comment type="subcellular location">
    <subcellularLocation>
        <location evidence="6 9">Nucleus</location>
    </subcellularLocation>
    <subcellularLocation>
        <location evidence="6">Chromosome</location>
    </subcellularLocation>
    <text evidence="6">Localized in distinct foci on chromatin and in chromocenters. Localizes to the inactive X chromosome. Seems to be recruited to H3K27me3, H3K9ac and H3K3me2 sites on chromatin.</text>
</comment>
<comment type="alternative products">
    <event type="alternative splicing"/>
    <isoform>
        <id>Q14781-1</id>
        <name>1</name>
        <sequence type="displayed"/>
    </isoform>
    <isoform>
        <id>Q14781-2</id>
        <name>2</name>
        <sequence type="described" ref="VSP_015816 VSP_015817"/>
    </isoform>
</comment>
<comment type="developmental stage">
    <text evidence="6">Expressed during interphase and metaphase.</text>
</comment>
<comment type="disease" evidence="7">
    <disease id="DI-02807">
        <name>46,XY sex reversal 5</name>
        <acronym>SRXY5</acronym>
        <description>A disorder of sex development. Affected individuals have a 46,XY karyotype but present as phenotypically normal females.</description>
        <dbReference type="MIM" id="613080"/>
    </disease>
    <text>The disease is caused by variants affecting the gene represented in this entry.</text>
</comment>
<comment type="miscellaneous">
    <text>The human orthologuous proteins of Drosophila Polycomb group protein Pc, CBX2, CBX4, CBX6, CBX7 and CBX8, show distinct nuclear localizations, contribute differently to transcriptional repression, and appear to be part of distinct PRC1-like protein complexes. The hPRC-H complex purification reported by PubMed:12167701 probably presents a mixture of different complexes.</text>
</comment>
<gene>
    <name type="primary">CBX2</name>
</gene>
<name>CBX2_HUMAN</name>
<evidence type="ECO:0000250" key="1">
    <source>
        <dbReference type="UniProtKB" id="P30658"/>
    </source>
</evidence>
<evidence type="ECO:0000255" key="2"/>
<evidence type="ECO:0000255" key="3">
    <source>
        <dbReference type="PROSITE-ProRule" id="PRU00053"/>
    </source>
</evidence>
<evidence type="ECO:0000256" key="4">
    <source>
        <dbReference type="SAM" id="MobiDB-lite"/>
    </source>
</evidence>
<evidence type="ECO:0000269" key="5">
    <source>
    </source>
</evidence>
<evidence type="ECO:0000269" key="6">
    <source>
    </source>
</evidence>
<evidence type="ECO:0000269" key="7">
    <source>
    </source>
</evidence>
<evidence type="ECO:0000269" key="8">
    <source>
    </source>
</evidence>
<evidence type="ECO:0000269" key="9">
    <source>
    </source>
</evidence>
<evidence type="ECO:0000303" key="10">
    <source>
    </source>
</evidence>
<evidence type="ECO:0007744" key="11">
    <source>
    </source>
</evidence>
<evidence type="ECO:0007744" key="12">
    <source>
    </source>
</evidence>
<evidence type="ECO:0007744" key="13">
    <source>
    </source>
</evidence>
<evidence type="ECO:0007829" key="14">
    <source>
        <dbReference type="PDB" id="3H91"/>
    </source>
</evidence>
<dbReference type="EMBL" id="AC105337">
    <property type="status" value="NOT_ANNOTATED_CDS"/>
    <property type="molecule type" value="Genomic_DNA"/>
</dbReference>
<dbReference type="EMBL" id="BC004252">
    <property type="protein sequence ID" value="AAH04252.1"/>
    <property type="molecule type" value="mRNA"/>
</dbReference>
<dbReference type="EMBL" id="BC119759">
    <property type="protein sequence ID" value="AAI19760.1"/>
    <property type="molecule type" value="mRNA"/>
</dbReference>
<dbReference type="EMBL" id="BC119760">
    <property type="protein sequence ID" value="AAI19761.1"/>
    <property type="molecule type" value="mRNA"/>
</dbReference>
<dbReference type="EMBL" id="X77824">
    <property type="protein sequence ID" value="CAA54839.1"/>
    <property type="molecule type" value="Genomic_DNA"/>
</dbReference>
<dbReference type="CCDS" id="CCDS11764.1">
    <molecule id="Q14781-2"/>
</dbReference>
<dbReference type="CCDS" id="CCDS32757.1">
    <molecule id="Q14781-1"/>
</dbReference>
<dbReference type="PIR" id="I38007">
    <property type="entry name" value="I38007"/>
</dbReference>
<dbReference type="RefSeq" id="NP_005180.1">
    <molecule id="Q14781-1"/>
    <property type="nucleotide sequence ID" value="NM_005189.3"/>
</dbReference>
<dbReference type="RefSeq" id="NP_116036.1">
    <molecule id="Q14781-2"/>
    <property type="nucleotide sequence ID" value="NM_032647.4"/>
</dbReference>
<dbReference type="PDB" id="2D9U">
    <property type="method" value="NMR"/>
    <property type="chains" value="A=9-69"/>
</dbReference>
<dbReference type="PDB" id="3H91">
    <property type="method" value="X-ray"/>
    <property type="resolution" value="1.50 A"/>
    <property type="chains" value="A/B=9-62"/>
</dbReference>
<dbReference type="PDB" id="5EPK">
    <property type="method" value="X-ray"/>
    <property type="resolution" value="1.80 A"/>
    <property type="chains" value="A=8-62"/>
</dbReference>
<dbReference type="PDBsum" id="2D9U"/>
<dbReference type="PDBsum" id="3H91"/>
<dbReference type="PDBsum" id="5EPK"/>
<dbReference type="BMRB" id="Q14781"/>
<dbReference type="SMR" id="Q14781"/>
<dbReference type="BioGRID" id="124228">
    <property type="interactions" value="125"/>
</dbReference>
<dbReference type="ComplexPortal" id="CPX-2480">
    <property type="entry name" value="Polycomb repressive complex 1, RING1-PCGF2-CBX2-PHC3 variant"/>
</dbReference>
<dbReference type="ComplexPortal" id="CPX-2605">
    <property type="entry name" value="Polycomb repressive complex 1, RING1-PCGF2-CBX2-PHC1 variant"/>
</dbReference>
<dbReference type="ComplexPortal" id="CPX-2609">
    <property type="entry name" value="Polycomb repressive complex 1, RING1-PCGF2-CBX2-PHC2 variant"/>
</dbReference>
<dbReference type="ComplexPortal" id="CPX-7501">
    <property type="entry name" value="Polycomb repressive complex 1, RING1-PCGF4-CBX2-PHC1 variant"/>
</dbReference>
<dbReference type="ComplexPortal" id="CPX-7502">
    <property type="entry name" value="Polycomb repressive complex 1, RING1-PCGF4-CBX2-PHC2 variant"/>
</dbReference>
<dbReference type="ComplexPortal" id="CPX-7504">
    <property type="entry name" value="Polycomb repressive complex 1, RING1-PCGF4-CBX2-PHC3 variant"/>
</dbReference>
<dbReference type="ComplexPortal" id="CPX-7519">
    <property type="entry name" value="Polycomb repressive complex 1, RING2-PCGF2-CBX2-PHC1 variant"/>
</dbReference>
<dbReference type="ComplexPortal" id="CPX-7522">
    <property type="entry name" value="Polycomb repressive complex 1, RING2-PCGF2-CBX2-PHC2 variant"/>
</dbReference>
<dbReference type="ComplexPortal" id="CPX-7523">
    <property type="entry name" value="Polycomb repressive complex 1, RING2-PCGF2-CBX2-PHC3 variant"/>
</dbReference>
<dbReference type="ComplexPortal" id="CPX-7541">
    <property type="entry name" value="Polycomb repressive complex 1, RING2-PCGF4-CBX2-PHC1 variant"/>
</dbReference>
<dbReference type="ComplexPortal" id="CPX-7542">
    <property type="entry name" value="Polycomb repressive complex 1, RING2-PCGF4-CBX2-PHC2 variant"/>
</dbReference>
<dbReference type="ComplexPortal" id="CPX-7544">
    <property type="entry name" value="Polycomb repressive complex 1, RING2-PCGF4-CBX2-PHC3 variant"/>
</dbReference>
<dbReference type="CORUM" id="Q14781"/>
<dbReference type="DIP" id="DIP-48604N"/>
<dbReference type="FunCoup" id="Q14781">
    <property type="interactions" value="1539"/>
</dbReference>
<dbReference type="IntAct" id="Q14781">
    <property type="interactions" value="86"/>
</dbReference>
<dbReference type="MINT" id="Q14781"/>
<dbReference type="STRING" id="9606.ENSP00000308750"/>
<dbReference type="BindingDB" id="Q14781"/>
<dbReference type="ChEMBL" id="CHEMBL3779761"/>
<dbReference type="GlyGen" id="Q14781">
    <property type="glycosylation" value="4 sites, 1 O-linked glycan (1 site)"/>
</dbReference>
<dbReference type="iPTMnet" id="Q14781"/>
<dbReference type="PhosphoSitePlus" id="Q14781"/>
<dbReference type="BioMuta" id="CBX2"/>
<dbReference type="DMDM" id="77416853"/>
<dbReference type="jPOST" id="Q14781"/>
<dbReference type="MassIVE" id="Q14781"/>
<dbReference type="PaxDb" id="9606-ENSP00000308750"/>
<dbReference type="PeptideAtlas" id="Q14781"/>
<dbReference type="ProteomicsDB" id="60169">
    <molecule id="Q14781-1"/>
</dbReference>
<dbReference type="ProteomicsDB" id="60170">
    <molecule id="Q14781-2"/>
</dbReference>
<dbReference type="Pumba" id="Q14781"/>
<dbReference type="ABCD" id="Q14781">
    <property type="antibodies" value="2 sequenced antibodies"/>
</dbReference>
<dbReference type="Antibodypedia" id="32656">
    <property type="antibodies" value="323 antibodies from 31 providers"/>
</dbReference>
<dbReference type="DNASU" id="84733"/>
<dbReference type="Ensembl" id="ENST00000269399.5">
    <molecule id="Q14781-2"/>
    <property type="protein sequence ID" value="ENSP00000269399.5"/>
    <property type="gene ID" value="ENSG00000173894.11"/>
</dbReference>
<dbReference type="Ensembl" id="ENST00000310942.9">
    <molecule id="Q14781-1"/>
    <property type="protein sequence ID" value="ENSP00000308750.4"/>
    <property type="gene ID" value="ENSG00000173894.11"/>
</dbReference>
<dbReference type="GeneID" id="84733"/>
<dbReference type="KEGG" id="hsa:84733"/>
<dbReference type="MANE-Select" id="ENST00000310942.9">
    <property type="protein sequence ID" value="ENSP00000308750.4"/>
    <property type="RefSeq nucleotide sequence ID" value="NM_005189.3"/>
    <property type="RefSeq protein sequence ID" value="NP_005180.1"/>
</dbReference>
<dbReference type="UCSC" id="uc002jxb.3">
    <molecule id="Q14781-1"/>
    <property type="organism name" value="human"/>
</dbReference>
<dbReference type="AGR" id="HGNC:1552"/>
<dbReference type="CTD" id="84733"/>
<dbReference type="DisGeNET" id="84733"/>
<dbReference type="GeneCards" id="CBX2"/>
<dbReference type="HGNC" id="HGNC:1552">
    <property type="gene designation" value="CBX2"/>
</dbReference>
<dbReference type="HPA" id="ENSG00000173894">
    <property type="expression patterns" value="Tissue enhanced (lymphoid tissue, testis)"/>
</dbReference>
<dbReference type="MalaCards" id="CBX2"/>
<dbReference type="MIM" id="602770">
    <property type="type" value="gene"/>
</dbReference>
<dbReference type="MIM" id="613080">
    <property type="type" value="phenotype"/>
</dbReference>
<dbReference type="neXtProt" id="NX_Q14781"/>
<dbReference type="OpenTargets" id="ENSG00000173894"/>
<dbReference type="Orphanet" id="242">
    <property type="disease" value="46,XY complete gonadal dysgenesis"/>
</dbReference>
<dbReference type="PharmGKB" id="PA26127"/>
<dbReference type="VEuPathDB" id="HostDB:ENSG00000173894"/>
<dbReference type="eggNOG" id="KOG2748">
    <property type="taxonomic scope" value="Eukaryota"/>
</dbReference>
<dbReference type="GeneTree" id="ENSGT00940000158816"/>
<dbReference type="HOGENOM" id="CLU_027573_0_0_1"/>
<dbReference type="InParanoid" id="Q14781"/>
<dbReference type="OMA" id="NCGISWQ"/>
<dbReference type="OrthoDB" id="8192126at2759"/>
<dbReference type="PAN-GO" id="Q14781">
    <property type="GO annotations" value="4 GO annotations based on evolutionary models"/>
</dbReference>
<dbReference type="PhylomeDB" id="Q14781"/>
<dbReference type="TreeFam" id="TF106456"/>
<dbReference type="PathwayCommons" id="Q14781"/>
<dbReference type="Reactome" id="R-HSA-2559580">
    <property type="pathway name" value="Oxidative Stress Induced Senescence"/>
</dbReference>
<dbReference type="Reactome" id="R-HSA-3108214">
    <property type="pathway name" value="SUMOylation of DNA damage response and repair proteins"/>
</dbReference>
<dbReference type="Reactome" id="R-HSA-3899300">
    <property type="pathway name" value="SUMOylation of transcription cofactors"/>
</dbReference>
<dbReference type="Reactome" id="R-HSA-4551638">
    <property type="pathway name" value="SUMOylation of chromatin organization proteins"/>
</dbReference>
<dbReference type="Reactome" id="R-HSA-4570464">
    <property type="pathway name" value="SUMOylation of RNA binding proteins"/>
</dbReference>
<dbReference type="Reactome" id="R-HSA-4655427">
    <property type="pathway name" value="SUMOylation of DNA methylation proteins"/>
</dbReference>
<dbReference type="Reactome" id="R-HSA-8939243">
    <property type="pathway name" value="RUNX1 interacts with co-factors whose precise effect on RUNX1 targets is not known"/>
</dbReference>
<dbReference type="Reactome" id="R-HSA-8943724">
    <property type="pathway name" value="Regulation of PTEN gene transcription"/>
</dbReference>
<dbReference type="SignaLink" id="Q14781"/>
<dbReference type="SIGNOR" id="Q14781"/>
<dbReference type="BioGRID-ORCS" id="84733">
    <property type="hits" value="11 hits in 1158 CRISPR screens"/>
</dbReference>
<dbReference type="CD-CODE" id="15E3C9A9">
    <property type="entry name" value="Synthetic Condensate 000166"/>
</dbReference>
<dbReference type="CD-CODE" id="B57B8AD8">
    <property type="entry name" value="Heterochromatin"/>
</dbReference>
<dbReference type="CD-CODE" id="F5FE5C72">
    <property type="entry name" value="Euchromatin"/>
</dbReference>
<dbReference type="CD-CODE" id="F701F3BC">
    <property type="entry name" value="PcG body"/>
</dbReference>
<dbReference type="ChiTaRS" id="CBX2">
    <property type="organism name" value="human"/>
</dbReference>
<dbReference type="EvolutionaryTrace" id="Q14781"/>
<dbReference type="GeneWiki" id="CBX2_(gene)"/>
<dbReference type="GenomeRNAi" id="84733"/>
<dbReference type="Pharos" id="Q14781">
    <property type="development level" value="Tchem"/>
</dbReference>
<dbReference type="PRO" id="PR:Q14781"/>
<dbReference type="Proteomes" id="UP000005640">
    <property type="component" value="Chromosome 17"/>
</dbReference>
<dbReference type="RNAct" id="Q14781">
    <property type="molecule type" value="protein"/>
</dbReference>
<dbReference type="Bgee" id="ENSG00000173894">
    <property type="expression patterns" value="Expressed in secondary oocyte and 135 other cell types or tissues"/>
</dbReference>
<dbReference type="GO" id="GO:0000791">
    <property type="term" value="C:euchromatin"/>
    <property type="evidence" value="ECO:0007669"/>
    <property type="project" value="Ensembl"/>
</dbReference>
<dbReference type="GO" id="GO:0000792">
    <property type="term" value="C:heterochromatin"/>
    <property type="evidence" value="ECO:0000318"/>
    <property type="project" value="GO_Central"/>
</dbReference>
<dbReference type="GO" id="GO:0005654">
    <property type="term" value="C:nucleoplasm"/>
    <property type="evidence" value="ECO:0000314"/>
    <property type="project" value="HPA"/>
</dbReference>
<dbReference type="GO" id="GO:0005634">
    <property type="term" value="C:nucleus"/>
    <property type="evidence" value="ECO:0000314"/>
    <property type="project" value="UniProtKB"/>
</dbReference>
<dbReference type="GO" id="GO:0031519">
    <property type="term" value="C:PcG protein complex"/>
    <property type="evidence" value="ECO:0000314"/>
    <property type="project" value="UniProtKB"/>
</dbReference>
<dbReference type="GO" id="GO:0035102">
    <property type="term" value="C:PRC1 complex"/>
    <property type="evidence" value="ECO:0000314"/>
    <property type="project" value="UniProtKB"/>
</dbReference>
<dbReference type="GO" id="GO:0003682">
    <property type="term" value="F:chromatin binding"/>
    <property type="evidence" value="ECO:0007669"/>
    <property type="project" value="Ensembl"/>
</dbReference>
<dbReference type="GO" id="GO:0003677">
    <property type="term" value="F:DNA binding"/>
    <property type="evidence" value="ECO:0007669"/>
    <property type="project" value="UniProtKB-KW"/>
</dbReference>
<dbReference type="GO" id="GO:0062072">
    <property type="term" value="F:histone H3K9me2/3 reader activity"/>
    <property type="evidence" value="ECO:0007669"/>
    <property type="project" value="Ensembl"/>
</dbReference>
<dbReference type="GO" id="GO:0035064">
    <property type="term" value="F:methylated histone binding"/>
    <property type="evidence" value="ECO:0000318"/>
    <property type="project" value="GO_Central"/>
</dbReference>
<dbReference type="GO" id="GO:0030154">
    <property type="term" value="P:cell differentiation"/>
    <property type="evidence" value="ECO:0007669"/>
    <property type="project" value="UniProtKB-KW"/>
</dbReference>
<dbReference type="GO" id="GO:0045137">
    <property type="term" value="P:development of primary sexual characteristics"/>
    <property type="evidence" value="ECO:0000315"/>
    <property type="project" value="UniProtKB"/>
</dbReference>
<dbReference type="GO" id="GO:0000122">
    <property type="term" value="P:negative regulation of transcription by RNA polymerase II"/>
    <property type="evidence" value="ECO:0000315"/>
    <property type="project" value="UniProtKB"/>
</dbReference>
<dbReference type="CDD" id="cd18647">
    <property type="entry name" value="CD_Cbx2"/>
    <property type="match status" value="1"/>
</dbReference>
<dbReference type="FunFam" id="2.40.50.40:FF:000006">
    <property type="entry name" value="Chromobox protein homolog 7"/>
    <property type="match status" value="1"/>
</dbReference>
<dbReference type="Gene3D" id="2.40.50.40">
    <property type="match status" value="1"/>
</dbReference>
<dbReference type="IDEAL" id="IID00670"/>
<dbReference type="InterPro" id="IPR042796">
    <property type="entry name" value="CBX2"/>
</dbReference>
<dbReference type="InterPro" id="IPR033773">
    <property type="entry name" value="CBX7_C"/>
</dbReference>
<dbReference type="InterPro" id="IPR016197">
    <property type="entry name" value="Chromo-like_dom_sf"/>
</dbReference>
<dbReference type="InterPro" id="IPR000953">
    <property type="entry name" value="Chromo/chromo_shadow_dom"/>
</dbReference>
<dbReference type="InterPro" id="IPR023780">
    <property type="entry name" value="Chromo_domain"/>
</dbReference>
<dbReference type="InterPro" id="IPR023779">
    <property type="entry name" value="Chromodomain_CS"/>
</dbReference>
<dbReference type="PANTHER" id="PTHR46860">
    <property type="entry name" value="CHROMOBOX PROTEIN HOMOLOG 2"/>
    <property type="match status" value="1"/>
</dbReference>
<dbReference type="PANTHER" id="PTHR46860:SF1">
    <property type="entry name" value="CHROMOBOX PROTEIN HOMOLOG 2"/>
    <property type="match status" value="1"/>
</dbReference>
<dbReference type="Pfam" id="PF17218">
    <property type="entry name" value="CBX7_C"/>
    <property type="match status" value="1"/>
</dbReference>
<dbReference type="Pfam" id="PF00385">
    <property type="entry name" value="Chromo"/>
    <property type="match status" value="1"/>
</dbReference>
<dbReference type="SMART" id="SM00298">
    <property type="entry name" value="CHROMO"/>
    <property type="match status" value="1"/>
</dbReference>
<dbReference type="SUPFAM" id="SSF54160">
    <property type="entry name" value="Chromo domain-like"/>
    <property type="match status" value="1"/>
</dbReference>
<dbReference type="PROSITE" id="PS00598">
    <property type="entry name" value="CHROMO_1"/>
    <property type="match status" value="1"/>
</dbReference>
<dbReference type="PROSITE" id="PS50013">
    <property type="entry name" value="CHROMO_2"/>
    <property type="match status" value="1"/>
</dbReference>
<feature type="chain" id="PRO_0000080201" description="Chromobox protein homolog 2">
    <location>
        <begin position="1"/>
        <end position="532"/>
    </location>
</feature>
<feature type="domain" description="Chromo" evidence="3">
    <location>
        <begin position="12"/>
        <end position="70"/>
    </location>
</feature>
<feature type="DNA-binding region" description="A.T hook">
    <location>
        <begin position="75"/>
        <end position="87"/>
    </location>
</feature>
<feature type="region of interest" description="Involved in the interaction with H3C15 and H3C1" evidence="6">
    <location>
        <begin position="1"/>
        <end position="66"/>
    </location>
</feature>
<feature type="region of interest" description="Disordered" evidence="4">
    <location>
        <begin position="60"/>
        <end position="204"/>
    </location>
</feature>
<feature type="region of interest" description="Disordered" evidence="4">
    <location>
        <begin position="296"/>
        <end position="348"/>
    </location>
</feature>
<feature type="region of interest" description="Disordered" evidence="4">
    <location>
        <begin position="379"/>
        <end position="493"/>
    </location>
</feature>
<feature type="short sequence motif" description="Nuclear localization signal" evidence="2">
    <location>
        <begin position="163"/>
        <end position="168"/>
    </location>
</feature>
<feature type="compositionally biased region" description="Basic and acidic residues" evidence="4">
    <location>
        <begin position="60"/>
        <end position="69"/>
    </location>
</feature>
<feature type="compositionally biased region" description="Basic residues" evidence="4">
    <location>
        <begin position="70"/>
        <end position="82"/>
    </location>
</feature>
<feature type="compositionally biased region" description="Low complexity" evidence="4">
    <location>
        <begin position="103"/>
        <end position="119"/>
    </location>
</feature>
<feature type="compositionally biased region" description="Basic and acidic residues" evidence="4">
    <location>
        <begin position="128"/>
        <end position="140"/>
    </location>
</feature>
<feature type="compositionally biased region" description="Low complexity" evidence="4">
    <location>
        <begin position="464"/>
        <end position="478"/>
    </location>
</feature>
<feature type="compositionally biased region" description="Polar residues" evidence="4">
    <location>
        <begin position="479"/>
        <end position="493"/>
    </location>
</feature>
<feature type="modified residue" description="Asymmetric dimethylarginine; alternate" evidence="12">
    <location>
        <position position="247"/>
    </location>
</feature>
<feature type="modified residue" description="Omega-N-methylarginine; alternate" evidence="12">
    <location>
        <position position="247"/>
    </location>
</feature>
<feature type="modified residue" description="Phosphoserine" evidence="11">
    <location>
        <position position="302"/>
    </location>
</feature>
<feature type="cross-link" description="Glycyl lysine isopeptide (Lys-Gly) (interchain with G-Cter in SUMO2)" evidence="13">
    <location>
        <position position="146"/>
    </location>
</feature>
<feature type="cross-link" description="Glycyl lysine isopeptide (Lys-Gly) (interchain with G-Cter in SUMO2)" evidence="13">
    <location>
        <position position="153"/>
    </location>
</feature>
<feature type="splice variant" id="VSP_015816" description="In isoform 2." evidence="10">
    <original>EPDAPSKSKSSSSSSSSTSSSSSSDEEDDSDLDAKRGPRGRETHPVPQKKAQILVAKPELKDPIRKKRGRKPLPPEQKATRRPVSLAKVLKTARKDLGAPASKLPPPLSAPVAGL</original>
    <variation>VGGCAGYADPTSQHPLGVGGRQREGLGPSGRGWHFCQQSVPLLGKQEPPFFLSLSFCCQGPQPAESSSPPLPGASCFSLSCTPLCWVAGSNCCRQALFPPRGSLGDGKEQEACVQ</variation>
    <location>
        <begin position="97"/>
        <end position="211"/>
    </location>
</feature>
<feature type="splice variant" id="VSP_015817" description="In isoform 2." evidence="10">
    <location>
        <begin position="212"/>
        <end position="532"/>
    </location>
</feature>
<feature type="sequence variant" id="VAR_063751" description="In SRXY5; dbSNP:rs121908255." evidence="7">
    <original>P</original>
    <variation>L</variation>
    <location>
        <position position="98"/>
    </location>
</feature>
<feature type="sequence variant" id="VAR_063752" description="In SRXY5; dbSNP:rs121908256." evidence="7">
    <original>R</original>
    <variation>P</variation>
    <location>
        <position position="443"/>
    </location>
</feature>
<feature type="mutagenesis site" description="Reduced interaction with H3C15 and H3C1." evidence="6">
    <original>I</original>
    <variation>F</variation>
    <location>
        <position position="17"/>
    </location>
</feature>
<feature type="strand" evidence="14">
    <location>
        <begin position="11"/>
        <end position="23"/>
    </location>
</feature>
<feature type="strand" evidence="14">
    <location>
        <begin position="26"/>
        <end position="33"/>
    </location>
</feature>
<feature type="helix" evidence="14">
    <location>
        <begin position="38"/>
        <end position="40"/>
    </location>
</feature>
<feature type="strand" evidence="14">
    <location>
        <begin position="42"/>
        <end position="45"/>
    </location>
</feature>
<feature type="helix" evidence="14">
    <location>
        <begin position="46"/>
        <end position="48"/>
    </location>
</feature>
<feature type="helix" evidence="14">
    <location>
        <begin position="53"/>
        <end position="59"/>
    </location>
</feature>
<keyword id="KW-0002">3D-structure</keyword>
<keyword id="KW-0025">Alternative splicing</keyword>
<keyword id="KW-0156">Chromatin regulator</keyword>
<keyword id="KW-0158">Chromosome</keyword>
<keyword id="KW-0221">Differentiation</keyword>
<keyword id="KW-0225">Disease variant</keyword>
<keyword id="KW-0238">DNA-binding</keyword>
<keyword id="KW-1017">Isopeptide bond</keyword>
<keyword id="KW-0488">Methylation</keyword>
<keyword id="KW-0539">Nucleus</keyword>
<keyword id="KW-0597">Phosphoprotein</keyword>
<keyword id="KW-1267">Proteomics identification</keyword>
<keyword id="KW-1185">Reference proteome</keyword>
<keyword id="KW-0678">Repressor</keyword>
<keyword id="KW-0726">Sexual differentiation</keyword>
<keyword id="KW-0804">Transcription</keyword>
<keyword id="KW-0805">Transcription regulation</keyword>
<keyword id="KW-0832">Ubl conjugation</keyword>
<organism>
    <name type="scientific">Homo sapiens</name>
    <name type="common">Human</name>
    <dbReference type="NCBI Taxonomy" id="9606"/>
    <lineage>
        <taxon>Eukaryota</taxon>
        <taxon>Metazoa</taxon>
        <taxon>Chordata</taxon>
        <taxon>Craniata</taxon>
        <taxon>Vertebrata</taxon>
        <taxon>Euteleostomi</taxon>
        <taxon>Mammalia</taxon>
        <taxon>Eutheria</taxon>
        <taxon>Euarchontoglires</taxon>
        <taxon>Primates</taxon>
        <taxon>Haplorrhini</taxon>
        <taxon>Catarrhini</taxon>
        <taxon>Hominidae</taxon>
        <taxon>Homo</taxon>
    </lineage>
</organism>